<comment type="catalytic activity">
    <reaction evidence="1">
        <text>tRNA(His) + L-histidine + ATP = L-histidyl-tRNA(His) + AMP + diphosphate + H(+)</text>
        <dbReference type="Rhea" id="RHEA:17313"/>
        <dbReference type="Rhea" id="RHEA-COMP:9665"/>
        <dbReference type="Rhea" id="RHEA-COMP:9689"/>
        <dbReference type="ChEBI" id="CHEBI:15378"/>
        <dbReference type="ChEBI" id="CHEBI:30616"/>
        <dbReference type="ChEBI" id="CHEBI:33019"/>
        <dbReference type="ChEBI" id="CHEBI:57595"/>
        <dbReference type="ChEBI" id="CHEBI:78442"/>
        <dbReference type="ChEBI" id="CHEBI:78527"/>
        <dbReference type="ChEBI" id="CHEBI:456215"/>
        <dbReference type="EC" id="6.1.1.21"/>
    </reaction>
</comment>
<comment type="subunit">
    <text evidence="1">Homodimer.</text>
</comment>
<comment type="subcellular location">
    <subcellularLocation>
        <location evidence="1">Cytoplasm</location>
    </subcellularLocation>
</comment>
<comment type="similarity">
    <text evidence="1">Belongs to the class-II aminoacyl-tRNA synthetase family.</text>
</comment>
<protein>
    <recommendedName>
        <fullName evidence="1">Histidine--tRNA ligase</fullName>
        <ecNumber evidence="1">6.1.1.21</ecNumber>
    </recommendedName>
    <alternativeName>
        <fullName evidence="1">Histidyl-tRNA synthetase</fullName>
        <shortName evidence="1">HisRS</shortName>
    </alternativeName>
</protein>
<accession>P62371</accession>
<feature type="chain" id="PRO_0000136186" description="Histidine--tRNA ligase">
    <location>
        <begin position="1"/>
        <end position="439"/>
    </location>
</feature>
<gene>
    <name evidence="1" type="primary">hisS</name>
    <name type="ordered locus">LIC_10048</name>
</gene>
<sequence length="439" mass="50619">MENQKNFLTTAPYKGTRDFYPEDMRLRNWMFSVMRETVLSFGYEEYDGPILESFDLYKAKSGEEIVERQLYDFIDKGERRVAIRPEMTPTLARMVAGNLRNLPKPVRWFSIPNLWRYEQPGKGRLREHWQLNVDLFGVDSHRAELEILLIADSILKKFGAPIGSYQIKVSHRKLLDSFLKNSLKLNGDQVHGVSKLLDKKSKISSEAFETEMKPFLNNFKEQFSLIETYLNSNLETVSKIPGIDTNSVSFIQNLFQELGELGIDKQLLFDPSIIRGFDYYTGCIFEVFDTNPENRRSLYGGGRYDNLIGLFSKEQLSGIGFGLGDVTLKNFLEGHNLIPNLSREKTIFLPIMDESLFVDTFKLSKELRENEILTETMLDSAKIGKQIQIAEKKGYRYVLFLGESEIRTETVQIKDLISGEQKSLPRKGLSDTLKKDFQL</sequence>
<evidence type="ECO:0000255" key="1">
    <source>
        <dbReference type="HAMAP-Rule" id="MF_00127"/>
    </source>
</evidence>
<organism>
    <name type="scientific">Leptospira interrogans serogroup Icterohaemorrhagiae serovar copenhageni (strain Fiocruz L1-130)</name>
    <dbReference type="NCBI Taxonomy" id="267671"/>
    <lineage>
        <taxon>Bacteria</taxon>
        <taxon>Pseudomonadati</taxon>
        <taxon>Spirochaetota</taxon>
        <taxon>Spirochaetia</taxon>
        <taxon>Leptospirales</taxon>
        <taxon>Leptospiraceae</taxon>
        <taxon>Leptospira</taxon>
    </lineage>
</organism>
<name>SYH_LEPIC</name>
<keyword id="KW-0030">Aminoacyl-tRNA synthetase</keyword>
<keyword id="KW-0067">ATP-binding</keyword>
<keyword id="KW-0963">Cytoplasm</keyword>
<keyword id="KW-0436">Ligase</keyword>
<keyword id="KW-0547">Nucleotide-binding</keyword>
<keyword id="KW-0648">Protein biosynthesis</keyword>
<proteinExistence type="inferred from homology"/>
<dbReference type="EC" id="6.1.1.21" evidence="1"/>
<dbReference type="EMBL" id="AE016823">
    <property type="protein sequence ID" value="AAS68685.1"/>
    <property type="molecule type" value="Genomic_DNA"/>
</dbReference>
<dbReference type="RefSeq" id="WP_000431287.1">
    <property type="nucleotide sequence ID" value="NC_005823.1"/>
</dbReference>
<dbReference type="SMR" id="P62371"/>
<dbReference type="GeneID" id="61143403"/>
<dbReference type="KEGG" id="lic:LIC_10048"/>
<dbReference type="HOGENOM" id="CLU_025113_3_1_12"/>
<dbReference type="Proteomes" id="UP000007037">
    <property type="component" value="Chromosome I"/>
</dbReference>
<dbReference type="GO" id="GO:0005737">
    <property type="term" value="C:cytoplasm"/>
    <property type="evidence" value="ECO:0007669"/>
    <property type="project" value="UniProtKB-SubCell"/>
</dbReference>
<dbReference type="GO" id="GO:0005524">
    <property type="term" value="F:ATP binding"/>
    <property type="evidence" value="ECO:0007669"/>
    <property type="project" value="UniProtKB-UniRule"/>
</dbReference>
<dbReference type="GO" id="GO:0004821">
    <property type="term" value="F:histidine-tRNA ligase activity"/>
    <property type="evidence" value="ECO:0007669"/>
    <property type="project" value="UniProtKB-UniRule"/>
</dbReference>
<dbReference type="GO" id="GO:0006427">
    <property type="term" value="P:histidyl-tRNA aminoacylation"/>
    <property type="evidence" value="ECO:0007669"/>
    <property type="project" value="UniProtKB-UniRule"/>
</dbReference>
<dbReference type="CDD" id="cd00773">
    <property type="entry name" value="HisRS-like_core"/>
    <property type="match status" value="1"/>
</dbReference>
<dbReference type="FunFam" id="3.30.930.10:FF:000122">
    <property type="entry name" value="Histidine--tRNA ligase"/>
    <property type="match status" value="1"/>
</dbReference>
<dbReference type="FunFam" id="3.40.50.800:FF:000041">
    <property type="entry name" value="Histidine--tRNA ligase"/>
    <property type="match status" value="1"/>
</dbReference>
<dbReference type="Gene3D" id="3.40.50.800">
    <property type="entry name" value="Anticodon-binding domain"/>
    <property type="match status" value="1"/>
</dbReference>
<dbReference type="Gene3D" id="3.30.930.10">
    <property type="entry name" value="Bira Bifunctional Protein, Domain 2"/>
    <property type="match status" value="1"/>
</dbReference>
<dbReference type="HAMAP" id="MF_00127">
    <property type="entry name" value="His_tRNA_synth"/>
    <property type="match status" value="1"/>
</dbReference>
<dbReference type="InterPro" id="IPR006195">
    <property type="entry name" value="aa-tRNA-synth_II"/>
</dbReference>
<dbReference type="InterPro" id="IPR045864">
    <property type="entry name" value="aa-tRNA-synth_II/BPL/LPL"/>
</dbReference>
<dbReference type="InterPro" id="IPR004154">
    <property type="entry name" value="Anticodon-bd"/>
</dbReference>
<dbReference type="InterPro" id="IPR036621">
    <property type="entry name" value="Anticodon-bd_dom_sf"/>
</dbReference>
<dbReference type="InterPro" id="IPR015807">
    <property type="entry name" value="His-tRNA-ligase"/>
</dbReference>
<dbReference type="InterPro" id="IPR041715">
    <property type="entry name" value="HisRS-like_core"/>
</dbReference>
<dbReference type="InterPro" id="IPR004516">
    <property type="entry name" value="HisRS/HisZ"/>
</dbReference>
<dbReference type="NCBIfam" id="TIGR00442">
    <property type="entry name" value="hisS"/>
    <property type="match status" value="1"/>
</dbReference>
<dbReference type="PANTHER" id="PTHR43707:SF1">
    <property type="entry name" value="HISTIDINE--TRNA LIGASE, MITOCHONDRIAL-RELATED"/>
    <property type="match status" value="1"/>
</dbReference>
<dbReference type="PANTHER" id="PTHR43707">
    <property type="entry name" value="HISTIDYL-TRNA SYNTHETASE"/>
    <property type="match status" value="1"/>
</dbReference>
<dbReference type="Pfam" id="PF03129">
    <property type="entry name" value="HGTP_anticodon"/>
    <property type="match status" value="1"/>
</dbReference>
<dbReference type="Pfam" id="PF13393">
    <property type="entry name" value="tRNA-synt_His"/>
    <property type="match status" value="1"/>
</dbReference>
<dbReference type="PIRSF" id="PIRSF001549">
    <property type="entry name" value="His-tRNA_synth"/>
    <property type="match status" value="1"/>
</dbReference>
<dbReference type="SUPFAM" id="SSF52954">
    <property type="entry name" value="Class II aaRS ABD-related"/>
    <property type="match status" value="1"/>
</dbReference>
<dbReference type="SUPFAM" id="SSF55681">
    <property type="entry name" value="Class II aaRS and biotin synthetases"/>
    <property type="match status" value="1"/>
</dbReference>
<dbReference type="PROSITE" id="PS50862">
    <property type="entry name" value="AA_TRNA_LIGASE_II"/>
    <property type="match status" value="1"/>
</dbReference>
<reference key="1">
    <citation type="journal article" date="2004" name="J. Bacteriol.">
        <title>Comparative genomics of two Leptospira interrogans serovars reveals novel insights into physiology and pathogenesis.</title>
        <authorList>
            <person name="Nascimento A.L.T.O."/>
            <person name="Ko A.I."/>
            <person name="Martins E.A.L."/>
            <person name="Monteiro-Vitorello C.B."/>
            <person name="Ho P.L."/>
            <person name="Haake D.A."/>
            <person name="Verjovski-Almeida S."/>
            <person name="Hartskeerl R.A."/>
            <person name="Marques M.V."/>
            <person name="Oliveira M.C."/>
            <person name="Menck C.F.M."/>
            <person name="Leite L.C.C."/>
            <person name="Carrer H."/>
            <person name="Coutinho L.L."/>
            <person name="Degrave W.M."/>
            <person name="Dellagostin O.A."/>
            <person name="El-Dorry H."/>
            <person name="Ferro E.S."/>
            <person name="Ferro M.I.T."/>
            <person name="Furlan L.R."/>
            <person name="Gamberini M."/>
            <person name="Giglioti E.A."/>
            <person name="Goes-Neto A."/>
            <person name="Goldman G.H."/>
            <person name="Goldman M.H.S."/>
            <person name="Harakava R."/>
            <person name="Jeronimo S.M.B."/>
            <person name="Junqueira-de-Azevedo I.L.M."/>
            <person name="Kimura E.T."/>
            <person name="Kuramae E.E."/>
            <person name="Lemos E.G.M."/>
            <person name="Lemos M.V.F."/>
            <person name="Marino C.L."/>
            <person name="Nunes L.R."/>
            <person name="de Oliveira R.C."/>
            <person name="Pereira G.G."/>
            <person name="Reis M.S."/>
            <person name="Schriefer A."/>
            <person name="Siqueira W.J."/>
            <person name="Sommer P."/>
            <person name="Tsai S.M."/>
            <person name="Simpson A.J.G."/>
            <person name="Ferro J.A."/>
            <person name="Camargo L.E.A."/>
            <person name="Kitajima J.P."/>
            <person name="Setubal J.C."/>
            <person name="Van Sluys M.A."/>
        </authorList>
    </citation>
    <scope>NUCLEOTIDE SEQUENCE [LARGE SCALE GENOMIC DNA]</scope>
    <source>
        <strain>Fiocruz L1-130</strain>
    </source>
</reference>